<comment type="function">
    <text evidence="1">ATPase subunit of a proteasome-like degradation complex; this subunit has chaperone activity. The binding of ATP and its subsequent hydrolysis by HslU are essential for unfolding of protein substrates subsequently hydrolyzed by HslV. HslU recognizes the N-terminal part of its protein substrates and unfolds these before they are guided to HslV for hydrolysis.</text>
</comment>
<comment type="subunit">
    <text evidence="1">A double ring-shaped homohexamer of HslV is capped on each side by a ring-shaped HslU homohexamer. The assembly of the HslU/HslV complex is dependent on binding of ATP.</text>
</comment>
<comment type="subcellular location">
    <subcellularLocation>
        <location evidence="1">Cytoplasm</location>
    </subcellularLocation>
</comment>
<comment type="similarity">
    <text evidence="1">Belongs to the ClpX chaperone family. HslU subfamily.</text>
</comment>
<reference key="1">
    <citation type="submission" date="2007-11" db="EMBL/GenBank/DDBJ databases">
        <title>Complete sequence of chromosome of Shewanella baltica OS195.</title>
        <authorList>
            <consortium name="US DOE Joint Genome Institute"/>
            <person name="Copeland A."/>
            <person name="Lucas S."/>
            <person name="Lapidus A."/>
            <person name="Barry K."/>
            <person name="Glavina del Rio T."/>
            <person name="Dalin E."/>
            <person name="Tice H."/>
            <person name="Pitluck S."/>
            <person name="Chain P."/>
            <person name="Malfatti S."/>
            <person name="Shin M."/>
            <person name="Vergez L."/>
            <person name="Schmutz J."/>
            <person name="Larimer F."/>
            <person name="Land M."/>
            <person name="Hauser L."/>
            <person name="Kyrpides N."/>
            <person name="Kim E."/>
            <person name="Brettar I."/>
            <person name="Rodrigues J."/>
            <person name="Konstantinidis K."/>
            <person name="Klappenbach J."/>
            <person name="Hofle M."/>
            <person name="Tiedje J."/>
            <person name="Richardson P."/>
        </authorList>
    </citation>
    <scope>NUCLEOTIDE SEQUENCE [LARGE SCALE GENOMIC DNA]</scope>
    <source>
        <strain>OS195</strain>
    </source>
</reference>
<feature type="chain" id="PRO_1000078454" description="ATP-dependent protease ATPase subunit HslU">
    <location>
        <begin position="1"/>
        <end position="442"/>
    </location>
</feature>
<feature type="region of interest" description="Disordered" evidence="2">
    <location>
        <begin position="137"/>
        <end position="156"/>
    </location>
</feature>
<feature type="binding site" evidence="1">
    <location>
        <position position="18"/>
    </location>
    <ligand>
        <name>ATP</name>
        <dbReference type="ChEBI" id="CHEBI:30616"/>
    </ligand>
</feature>
<feature type="binding site" evidence="1">
    <location>
        <begin position="60"/>
        <end position="65"/>
    </location>
    <ligand>
        <name>ATP</name>
        <dbReference type="ChEBI" id="CHEBI:30616"/>
    </ligand>
</feature>
<feature type="binding site" evidence="1">
    <location>
        <position position="255"/>
    </location>
    <ligand>
        <name>ATP</name>
        <dbReference type="ChEBI" id="CHEBI:30616"/>
    </ligand>
</feature>
<feature type="binding site" evidence="1">
    <location>
        <position position="320"/>
    </location>
    <ligand>
        <name>ATP</name>
        <dbReference type="ChEBI" id="CHEBI:30616"/>
    </ligand>
</feature>
<feature type="binding site" evidence="1">
    <location>
        <position position="392"/>
    </location>
    <ligand>
        <name>ATP</name>
        <dbReference type="ChEBI" id="CHEBI:30616"/>
    </ligand>
</feature>
<name>HSLU_SHEB9</name>
<sequence length="442" mass="50006">MSEMTPREIVHELDAHIIGQQKAKRSVAVALRNRWRRMQLDVDFRQEVTPKNILMIGPTGVGKTEIARRLAKLANAPFIKVEATKYTEVGYVGKEVEQIIRDLTDIAIKLTREQQMGKCRQRAEENAEERILDALLPKPKNDWESTETDSSSNTRQVFRKKLREGQLDDKEIDIDVAQPQVGVEIMSPPGMEEMTNQLQSLFKNMGQAPAKRRKMKIKEAFKLLIEEEAAKLVNQEDLKEQAIEMVEQHGIVFLDEIDKICKRGETSGPDVSREGVQRDLLPLIEGCTVTTKHGMVKTDHILFIASGAFQMSKPSDLIPELQGRLPIRVELDALSANDFKRILTEPHASLTEQYIALMNTEGVKVEFSESGIDSIAKAAWQVNERTENIGARRLHTVMEKLMEDISYEASEKSGSAFVIDADYVSAHLDNLVQDEDLSRFIL</sequence>
<keyword id="KW-0067">ATP-binding</keyword>
<keyword id="KW-0143">Chaperone</keyword>
<keyword id="KW-0963">Cytoplasm</keyword>
<keyword id="KW-0547">Nucleotide-binding</keyword>
<keyword id="KW-0346">Stress response</keyword>
<protein>
    <recommendedName>
        <fullName evidence="1">ATP-dependent protease ATPase subunit HslU</fullName>
    </recommendedName>
    <alternativeName>
        <fullName evidence="1">Unfoldase HslU</fullName>
    </alternativeName>
</protein>
<accession>A9KYP8</accession>
<organism>
    <name type="scientific">Shewanella baltica (strain OS195)</name>
    <dbReference type="NCBI Taxonomy" id="399599"/>
    <lineage>
        <taxon>Bacteria</taxon>
        <taxon>Pseudomonadati</taxon>
        <taxon>Pseudomonadota</taxon>
        <taxon>Gammaproteobacteria</taxon>
        <taxon>Alteromonadales</taxon>
        <taxon>Shewanellaceae</taxon>
        <taxon>Shewanella</taxon>
    </lineage>
</organism>
<dbReference type="EMBL" id="CP000891">
    <property type="protein sequence ID" value="ABX47642.1"/>
    <property type="molecule type" value="Genomic_DNA"/>
</dbReference>
<dbReference type="RefSeq" id="WP_006083301.1">
    <property type="nucleotide sequence ID" value="NC_009997.1"/>
</dbReference>
<dbReference type="SMR" id="A9KYP8"/>
<dbReference type="GeneID" id="11770797"/>
<dbReference type="KEGG" id="sbn:Sbal195_0462"/>
<dbReference type="HOGENOM" id="CLU_033123_0_0_6"/>
<dbReference type="Proteomes" id="UP000000770">
    <property type="component" value="Chromosome"/>
</dbReference>
<dbReference type="GO" id="GO:0009376">
    <property type="term" value="C:HslUV protease complex"/>
    <property type="evidence" value="ECO:0007669"/>
    <property type="project" value="UniProtKB-UniRule"/>
</dbReference>
<dbReference type="GO" id="GO:0005524">
    <property type="term" value="F:ATP binding"/>
    <property type="evidence" value="ECO:0007669"/>
    <property type="project" value="UniProtKB-UniRule"/>
</dbReference>
<dbReference type="GO" id="GO:0016887">
    <property type="term" value="F:ATP hydrolysis activity"/>
    <property type="evidence" value="ECO:0007669"/>
    <property type="project" value="InterPro"/>
</dbReference>
<dbReference type="GO" id="GO:0008233">
    <property type="term" value="F:peptidase activity"/>
    <property type="evidence" value="ECO:0007669"/>
    <property type="project" value="InterPro"/>
</dbReference>
<dbReference type="GO" id="GO:0036402">
    <property type="term" value="F:proteasome-activating activity"/>
    <property type="evidence" value="ECO:0007669"/>
    <property type="project" value="UniProtKB-UniRule"/>
</dbReference>
<dbReference type="GO" id="GO:0043335">
    <property type="term" value="P:protein unfolding"/>
    <property type="evidence" value="ECO:0007669"/>
    <property type="project" value="UniProtKB-UniRule"/>
</dbReference>
<dbReference type="GO" id="GO:0051603">
    <property type="term" value="P:proteolysis involved in protein catabolic process"/>
    <property type="evidence" value="ECO:0007669"/>
    <property type="project" value="TreeGrafter"/>
</dbReference>
<dbReference type="CDD" id="cd19498">
    <property type="entry name" value="RecA-like_HslU"/>
    <property type="match status" value="1"/>
</dbReference>
<dbReference type="FunFam" id="1.10.8.10:FF:000028">
    <property type="entry name" value="ATP-dependent protease ATPase subunit HslU"/>
    <property type="match status" value="1"/>
</dbReference>
<dbReference type="FunFam" id="1.10.8.60:FF:000027">
    <property type="entry name" value="ATP-dependent protease ATPase subunit HslU"/>
    <property type="match status" value="1"/>
</dbReference>
<dbReference type="FunFam" id="3.40.50.300:FF:000213">
    <property type="entry name" value="ATP-dependent protease ATPase subunit HslU"/>
    <property type="match status" value="1"/>
</dbReference>
<dbReference type="FunFam" id="3.40.50.300:FF:000220">
    <property type="entry name" value="ATP-dependent protease ATPase subunit HslU"/>
    <property type="match status" value="1"/>
</dbReference>
<dbReference type="Gene3D" id="1.10.8.60">
    <property type="match status" value="1"/>
</dbReference>
<dbReference type="Gene3D" id="3.40.50.300">
    <property type="entry name" value="P-loop containing nucleotide triphosphate hydrolases"/>
    <property type="match status" value="2"/>
</dbReference>
<dbReference type="HAMAP" id="MF_00249">
    <property type="entry name" value="HslU"/>
    <property type="match status" value="1"/>
</dbReference>
<dbReference type="InterPro" id="IPR003593">
    <property type="entry name" value="AAA+_ATPase"/>
</dbReference>
<dbReference type="InterPro" id="IPR050052">
    <property type="entry name" value="ATP-dep_Clp_protease_ClpX"/>
</dbReference>
<dbReference type="InterPro" id="IPR003959">
    <property type="entry name" value="ATPase_AAA_core"/>
</dbReference>
<dbReference type="InterPro" id="IPR019489">
    <property type="entry name" value="Clp_ATPase_C"/>
</dbReference>
<dbReference type="InterPro" id="IPR004491">
    <property type="entry name" value="HslU"/>
</dbReference>
<dbReference type="InterPro" id="IPR027417">
    <property type="entry name" value="P-loop_NTPase"/>
</dbReference>
<dbReference type="NCBIfam" id="TIGR00390">
    <property type="entry name" value="hslU"/>
    <property type="match status" value="1"/>
</dbReference>
<dbReference type="NCBIfam" id="NF003544">
    <property type="entry name" value="PRK05201.1"/>
    <property type="match status" value="1"/>
</dbReference>
<dbReference type="PANTHER" id="PTHR48102">
    <property type="entry name" value="ATP-DEPENDENT CLP PROTEASE ATP-BINDING SUBUNIT CLPX-LIKE, MITOCHONDRIAL-RELATED"/>
    <property type="match status" value="1"/>
</dbReference>
<dbReference type="PANTHER" id="PTHR48102:SF3">
    <property type="entry name" value="ATP-DEPENDENT PROTEASE ATPASE SUBUNIT HSLU"/>
    <property type="match status" value="1"/>
</dbReference>
<dbReference type="Pfam" id="PF00004">
    <property type="entry name" value="AAA"/>
    <property type="match status" value="1"/>
</dbReference>
<dbReference type="Pfam" id="PF07724">
    <property type="entry name" value="AAA_2"/>
    <property type="match status" value="1"/>
</dbReference>
<dbReference type="SMART" id="SM00382">
    <property type="entry name" value="AAA"/>
    <property type="match status" value="1"/>
</dbReference>
<dbReference type="SMART" id="SM01086">
    <property type="entry name" value="ClpB_D2-small"/>
    <property type="match status" value="1"/>
</dbReference>
<dbReference type="SUPFAM" id="SSF52540">
    <property type="entry name" value="P-loop containing nucleoside triphosphate hydrolases"/>
    <property type="match status" value="1"/>
</dbReference>
<gene>
    <name evidence="1" type="primary">hslU</name>
    <name type="ordered locus">Sbal195_0462</name>
</gene>
<proteinExistence type="inferred from homology"/>
<evidence type="ECO:0000255" key="1">
    <source>
        <dbReference type="HAMAP-Rule" id="MF_00249"/>
    </source>
</evidence>
<evidence type="ECO:0000256" key="2">
    <source>
        <dbReference type="SAM" id="MobiDB-lite"/>
    </source>
</evidence>